<reference key="1">
    <citation type="journal article" date="2003" name="Genome Res.">
        <title>Tropheryma whipplei twist: a human pathogenic Actinobacteria with a reduced genome.</title>
        <authorList>
            <person name="Raoult D."/>
            <person name="Ogata H."/>
            <person name="Audic S."/>
            <person name="Robert C."/>
            <person name="Suhre K."/>
            <person name="Drancourt M."/>
            <person name="Claverie J.-M."/>
        </authorList>
    </citation>
    <scope>NUCLEOTIDE SEQUENCE [LARGE SCALE GENOMIC DNA]</scope>
    <source>
        <strain>Twist</strain>
    </source>
</reference>
<accession>Q83G01</accession>
<sequence length="119" mass="12835">MSLTSRASARKRRHVRLRKKISGTCDRPRLSVTRSNRHVFVQAVDDISGKTLVSASTMEKDIRALELGKTERALAVGKLVAQRALAVGVKSAVFDRGGCKYTGRVAAVAEGAREAGLQT</sequence>
<protein>
    <recommendedName>
        <fullName evidence="1">Large ribosomal subunit protein uL18</fullName>
    </recommendedName>
    <alternativeName>
        <fullName evidence="2">50S ribosomal protein L18</fullName>
    </alternativeName>
</protein>
<feature type="chain" id="PRO_0000131378" description="Large ribosomal subunit protein uL18">
    <location>
        <begin position="1"/>
        <end position="119"/>
    </location>
</feature>
<gene>
    <name evidence="1" type="primary">rplR</name>
    <name type="ordered locus">TWT_539</name>
</gene>
<proteinExistence type="inferred from homology"/>
<keyword id="KW-1185">Reference proteome</keyword>
<keyword id="KW-0687">Ribonucleoprotein</keyword>
<keyword id="KW-0689">Ribosomal protein</keyword>
<keyword id="KW-0694">RNA-binding</keyword>
<keyword id="KW-0699">rRNA-binding</keyword>
<comment type="function">
    <text evidence="1">This is one of the proteins that bind and probably mediate the attachment of the 5S RNA into the large ribosomal subunit, where it forms part of the central protuberance.</text>
</comment>
<comment type="subunit">
    <text evidence="1">Part of the 50S ribosomal subunit; part of the 5S rRNA/L5/L18/L25 subcomplex. Contacts the 5S and 23S rRNAs.</text>
</comment>
<comment type="similarity">
    <text evidence="1">Belongs to the universal ribosomal protein uL18 family.</text>
</comment>
<organism>
    <name type="scientific">Tropheryma whipplei (strain Twist)</name>
    <name type="common">Whipple's bacillus</name>
    <dbReference type="NCBI Taxonomy" id="203267"/>
    <lineage>
        <taxon>Bacteria</taxon>
        <taxon>Bacillati</taxon>
        <taxon>Actinomycetota</taxon>
        <taxon>Actinomycetes</taxon>
        <taxon>Micrococcales</taxon>
        <taxon>Tropherymataceae</taxon>
        <taxon>Tropheryma</taxon>
    </lineage>
</organism>
<dbReference type="EMBL" id="AE014184">
    <property type="protein sequence ID" value="AAO44636.1"/>
    <property type="molecule type" value="Genomic_DNA"/>
</dbReference>
<dbReference type="RefSeq" id="WP_011096180.1">
    <property type="nucleotide sequence ID" value="NC_004572.3"/>
</dbReference>
<dbReference type="SMR" id="Q83G01"/>
<dbReference type="STRING" id="203267.TWT_539"/>
<dbReference type="GeneID" id="67387998"/>
<dbReference type="KEGG" id="twh:TWT_539"/>
<dbReference type="eggNOG" id="COG0256">
    <property type="taxonomic scope" value="Bacteria"/>
</dbReference>
<dbReference type="HOGENOM" id="CLU_098841_0_1_11"/>
<dbReference type="OrthoDB" id="9810939at2"/>
<dbReference type="Proteomes" id="UP000002200">
    <property type="component" value="Chromosome"/>
</dbReference>
<dbReference type="GO" id="GO:0022625">
    <property type="term" value="C:cytosolic large ribosomal subunit"/>
    <property type="evidence" value="ECO:0007669"/>
    <property type="project" value="TreeGrafter"/>
</dbReference>
<dbReference type="GO" id="GO:0008097">
    <property type="term" value="F:5S rRNA binding"/>
    <property type="evidence" value="ECO:0007669"/>
    <property type="project" value="TreeGrafter"/>
</dbReference>
<dbReference type="GO" id="GO:0003735">
    <property type="term" value="F:structural constituent of ribosome"/>
    <property type="evidence" value="ECO:0007669"/>
    <property type="project" value="InterPro"/>
</dbReference>
<dbReference type="GO" id="GO:0006412">
    <property type="term" value="P:translation"/>
    <property type="evidence" value="ECO:0007669"/>
    <property type="project" value="UniProtKB-UniRule"/>
</dbReference>
<dbReference type="CDD" id="cd00432">
    <property type="entry name" value="Ribosomal_L18_L5e"/>
    <property type="match status" value="1"/>
</dbReference>
<dbReference type="FunFam" id="3.30.420.100:FF:000001">
    <property type="entry name" value="50S ribosomal protein L18"/>
    <property type="match status" value="1"/>
</dbReference>
<dbReference type="Gene3D" id="3.30.420.100">
    <property type="match status" value="1"/>
</dbReference>
<dbReference type="HAMAP" id="MF_01337_B">
    <property type="entry name" value="Ribosomal_uL18_B"/>
    <property type="match status" value="1"/>
</dbReference>
<dbReference type="InterPro" id="IPR004389">
    <property type="entry name" value="Ribosomal_uL18_bac-type"/>
</dbReference>
<dbReference type="InterPro" id="IPR005484">
    <property type="entry name" value="Ribosomal_uL18_bac/euk"/>
</dbReference>
<dbReference type="NCBIfam" id="TIGR00060">
    <property type="entry name" value="L18_bact"/>
    <property type="match status" value="1"/>
</dbReference>
<dbReference type="PANTHER" id="PTHR12899">
    <property type="entry name" value="39S RIBOSOMAL PROTEIN L18, MITOCHONDRIAL"/>
    <property type="match status" value="1"/>
</dbReference>
<dbReference type="PANTHER" id="PTHR12899:SF3">
    <property type="entry name" value="LARGE RIBOSOMAL SUBUNIT PROTEIN UL18M"/>
    <property type="match status" value="1"/>
</dbReference>
<dbReference type="Pfam" id="PF00861">
    <property type="entry name" value="Ribosomal_L18p"/>
    <property type="match status" value="1"/>
</dbReference>
<dbReference type="SUPFAM" id="SSF53137">
    <property type="entry name" value="Translational machinery components"/>
    <property type="match status" value="1"/>
</dbReference>
<evidence type="ECO:0000255" key="1">
    <source>
        <dbReference type="HAMAP-Rule" id="MF_01337"/>
    </source>
</evidence>
<evidence type="ECO:0000305" key="2"/>
<name>RL18_TROWT</name>